<proteinExistence type="evidence at transcript level"/>
<dbReference type="EC" id="3.4.21.71"/>
<dbReference type="EMBL" id="X97635">
    <property type="protein sequence ID" value="CAA66231.1"/>
    <property type="molecule type" value="mRNA"/>
</dbReference>
<dbReference type="RefSeq" id="NP_777139.1">
    <property type="nucleotide sequence ID" value="NM_174714.2"/>
</dbReference>
<dbReference type="SMR" id="Q29461"/>
<dbReference type="FunCoup" id="Q29461">
    <property type="interactions" value="117"/>
</dbReference>
<dbReference type="STRING" id="9913.ENSBTAP00000061265"/>
<dbReference type="MEROPS" id="S01.155"/>
<dbReference type="PaxDb" id="9913-ENSBTAP00000033941"/>
<dbReference type="GeneID" id="282687"/>
<dbReference type="KEGG" id="bta:282687"/>
<dbReference type="CTD" id="63036"/>
<dbReference type="eggNOG" id="KOG3627">
    <property type="taxonomic scope" value="Eukaryota"/>
</dbReference>
<dbReference type="InParanoid" id="Q29461"/>
<dbReference type="OrthoDB" id="10061449at2759"/>
<dbReference type="Proteomes" id="UP000009136">
    <property type="component" value="Unplaced"/>
</dbReference>
<dbReference type="GO" id="GO:0005576">
    <property type="term" value="C:extracellular region"/>
    <property type="evidence" value="ECO:0000250"/>
    <property type="project" value="UniProtKB"/>
</dbReference>
<dbReference type="GO" id="GO:0005615">
    <property type="term" value="C:extracellular space"/>
    <property type="evidence" value="ECO:0000318"/>
    <property type="project" value="GO_Central"/>
</dbReference>
<dbReference type="GO" id="GO:0004175">
    <property type="term" value="F:endopeptidase activity"/>
    <property type="evidence" value="ECO:0000250"/>
    <property type="project" value="UniProtKB"/>
</dbReference>
<dbReference type="GO" id="GO:0004252">
    <property type="term" value="F:serine-type endopeptidase activity"/>
    <property type="evidence" value="ECO:0000318"/>
    <property type="project" value="GO_Central"/>
</dbReference>
<dbReference type="GO" id="GO:1901143">
    <property type="term" value="P:insulin catabolic process"/>
    <property type="evidence" value="ECO:0000250"/>
    <property type="project" value="UniProtKB"/>
</dbReference>
<dbReference type="GO" id="GO:0006508">
    <property type="term" value="P:proteolysis"/>
    <property type="evidence" value="ECO:0000318"/>
    <property type="project" value="GO_Central"/>
</dbReference>
<dbReference type="GO" id="GO:0050796">
    <property type="term" value="P:regulation of insulin secretion"/>
    <property type="evidence" value="ECO:0000250"/>
    <property type="project" value="UniProtKB"/>
</dbReference>
<dbReference type="GO" id="GO:0090330">
    <property type="term" value="P:regulation of platelet aggregation"/>
    <property type="evidence" value="ECO:0000250"/>
    <property type="project" value="UniProtKB"/>
</dbReference>
<dbReference type="GO" id="GO:0032868">
    <property type="term" value="P:response to insulin"/>
    <property type="evidence" value="ECO:0000250"/>
    <property type="project" value="UniProtKB"/>
</dbReference>
<dbReference type="CDD" id="cd00190">
    <property type="entry name" value="Tryp_SPc"/>
    <property type="match status" value="1"/>
</dbReference>
<dbReference type="FunFam" id="2.40.10.10:FF:000017">
    <property type="entry name" value="Chymotrypsin-like elastase family member 1"/>
    <property type="match status" value="1"/>
</dbReference>
<dbReference type="FunFam" id="2.40.10.10:FF:000004">
    <property type="entry name" value="Tryptase gamma 1"/>
    <property type="match status" value="1"/>
</dbReference>
<dbReference type="Gene3D" id="2.40.10.10">
    <property type="entry name" value="Trypsin-like serine proteases"/>
    <property type="match status" value="2"/>
</dbReference>
<dbReference type="InterPro" id="IPR050850">
    <property type="entry name" value="Peptidase_S1_Elastase_sf"/>
</dbReference>
<dbReference type="InterPro" id="IPR009003">
    <property type="entry name" value="Peptidase_S1_PA"/>
</dbReference>
<dbReference type="InterPro" id="IPR043504">
    <property type="entry name" value="Peptidase_S1_PA_chymotrypsin"/>
</dbReference>
<dbReference type="InterPro" id="IPR001314">
    <property type="entry name" value="Peptidase_S1A"/>
</dbReference>
<dbReference type="InterPro" id="IPR001254">
    <property type="entry name" value="Trypsin_dom"/>
</dbReference>
<dbReference type="InterPro" id="IPR018114">
    <property type="entry name" value="TRYPSIN_HIS"/>
</dbReference>
<dbReference type="InterPro" id="IPR033116">
    <property type="entry name" value="TRYPSIN_SER"/>
</dbReference>
<dbReference type="PANTHER" id="PTHR24257">
    <property type="entry name" value="CHYMOTRYPSIN-LIKE ELASTASE FAMILY MEMBER"/>
    <property type="match status" value="1"/>
</dbReference>
<dbReference type="PANTHER" id="PTHR24257:SF19">
    <property type="entry name" value="CHYMOTRYPSIN-LIKE ELASTASE FAMILY MEMBER 2B"/>
    <property type="match status" value="1"/>
</dbReference>
<dbReference type="Pfam" id="PF00089">
    <property type="entry name" value="Trypsin"/>
    <property type="match status" value="1"/>
</dbReference>
<dbReference type="PRINTS" id="PR00722">
    <property type="entry name" value="CHYMOTRYPSIN"/>
</dbReference>
<dbReference type="SMART" id="SM00020">
    <property type="entry name" value="Tryp_SPc"/>
    <property type="match status" value="1"/>
</dbReference>
<dbReference type="SUPFAM" id="SSF50494">
    <property type="entry name" value="Trypsin-like serine proteases"/>
    <property type="match status" value="1"/>
</dbReference>
<dbReference type="PROSITE" id="PS50240">
    <property type="entry name" value="TRYPSIN_DOM"/>
    <property type="match status" value="1"/>
</dbReference>
<dbReference type="PROSITE" id="PS00134">
    <property type="entry name" value="TRYPSIN_HIS"/>
    <property type="match status" value="1"/>
</dbReference>
<dbReference type="PROSITE" id="PS00135">
    <property type="entry name" value="TRYPSIN_SER"/>
    <property type="match status" value="1"/>
</dbReference>
<reference key="1">
    <citation type="journal article" date="1997" name="Comp. Biochem. Physiol.">
        <title>Bovine pancreatic preproelastases I and II: comparison of nucleotide and amino acid sequences and tissue specific expression.</title>
        <authorList>
            <person name="Gestin M."/>
            <person name="le Huerou-Luron I."/>
            <person name="Wicker-Planquart C."/>
            <person name="le Drean G."/>
            <person name="Chaix J.-C."/>
            <person name="Puigserver A."/>
            <person name="Guilloteau P."/>
        </authorList>
    </citation>
    <scope>NUCLEOTIDE SEQUENCE [MRNA]</scope>
    <source>
        <tissue>Pancreas</tissue>
    </source>
</reference>
<keyword id="KW-1015">Disulfide bond</keyword>
<keyword id="KW-0378">Hydrolase</keyword>
<keyword id="KW-0645">Protease</keyword>
<keyword id="KW-1185">Reference proteome</keyword>
<keyword id="KW-0964">Secreted</keyword>
<keyword id="KW-0720">Serine protease</keyword>
<keyword id="KW-0732">Signal</keyword>
<keyword id="KW-0865">Zymogen</keyword>
<feature type="signal peptide" evidence="1">
    <location>
        <begin position="1"/>
        <end position="16"/>
    </location>
</feature>
<feature type="propeptide" id="PRO_0000027685" description="Activation peptide" evidence="1">
    <location>
        <begin position="17"/>
        <end position="28"/>
    </location>
</feature>
<feature type="chain" id="PRO_0000027686" description="Chymotrypsin-like elastase family member 2A">
    <location>
        <begin position="29"/>
        <end position="269"/>
    </location>
</feature>
<feature type="domain" description="Peptidase S1" evidence="3">
    <location>
        <begin position="29"/>
        <end position="267"/>
    </location>
</feature>
<feature type="active site" description="Charge relay system" evidence="1">
    <location>
        <position position="73"/>
    </location>
</feature>
<feature type="active site" description="Charge relay system" evidence="1">
    <location>
        <position position="121"/>
    </location>
</feature>
<feature type="active site" description="Charge relay system" evidence="1">
    <location>
        <position position="216"/>
    </location>
</feature>
<feature type="disulfide bond" evidence="3">
    <location>
        <begin position="58"/>
        <end position="74"/>
    </location>
</feature>
<feature type="disulfide bond" evidence="3">
    <location>
        <begin position="155"/>
        <end position="222"/>
    </location>
</feature>
<feature type="disulfide bond" evidence="3">
    <location>
        <begin position="186"/>
        <end position="202"/>
    </location>
</feature>
<feature type="disulfide bond" evidence="3">
    <location>
        <begin position="212"/>
        <end position="243"/>
    </location>
</feature>
<gene>
    <name type="primary">CELA2A</name>
    <name type="synonym">ELA2</name>
    <name type="synonym">ELA2A</name>
</gene>
<evidence type="ECO:0000250" key="1"/>
<evidence type="ECO:0000250" key="2">
    <source>
        <dbReference type="UniProtKB" id="P08217"/>
    </source>
</evidence>
<evidence type="ECO:0000255" key="3">
    <source>
        <dbReference type="PROSITE-ProRule" id="PRU00274"/>
    </source>
</evidence>
<sequence length="269" mass="28857">MIRALLLSTLVAGALSCGVPTYPPQLSRVVGGEDARPNSWPWQVSLQYSSSGQWRHTCGGSLIEQNWVLTAAHCISSSRTYRVVVGRQSLSTVESGSLTIAVSKSVIHEKWNSNQLAQGNDIALLKLASSVPLTDKIQLGCLPAAGTILPNNYVCYVTGWGRLQSNGALPDILQQGKLLVVDYATCSNPSWWGSTVKTNMICAGGDGVTSSCNGDSGGPLNCQAANRQWQVHGIVSFGSSLGCNYYRKPSVFTRVSNYNDWISSVIENN</sequence>
<accession>Q29461</accession>
<protein>
    <recommendedName>
        <fullName>Chymotrypsin-like elastase family member 2A</fullName>
        <ecNumber>3.4.21.71</ecNumber>
    </recommendedName>
    <alternativeName>
        <fullName>Elastase II</fullName>
    </alternativeName>
    <alternativeName>
        <fullName>Elastase-2</fullName>
    </alternativeName>
    <alternativeName>
        <fullName>Elastase-2A</fullName>
    </alternativeName>
</protein>
<comment type="function">
    <text evidence="2">Elastase that enhances insulin signaling and might have a physiologic role in cellular glucose metabolism. Circulates in plasma and reduces platelet hyperactivation, triggers both insulin secretion and degradation, and increases insulin sensitivity.</text>
</comment>
<comment type="catalytic activity">
    <reaction evidence="2">
        <text>Preferential cleavage: Leu-|-Xaa, Met-|-Xaa and Phe-|-Xaa. Hydrolyzes elastin.</text>
        <dbReference type="EC" id="3.4.21.71"/>
    </reaction>
</comment>
<comment type="subunit">
    <text evidence="2">Interacts with CPA1. Interacts with SERPINA1.</text>
</comment>
<comment type="subcellular location">
    <subcellularLocation>
        <location evidence="2">Secreted</location>
    </subcellularLocation>
</comment>
<comment type="tissue specificity">
    <text>Pancreas.</text>
</comment>
<comment type="similarity">
    <text evidence="3">Belongs to the peptidase S1 family. Elastase subfamily.</text>
</comment>
<organism>
    <name type="scientific">Bos taurus</name>
    <name type="common">Bovine</name>
    <dbReference type="NCBI Taxonomy" id="9913"/>
    <lineage>
        <taxon>Eukaryota</taxon>
        <taxon>Metazoa</taxon>
        <taxon>Chordata</taxon>
        <taxon>Craniata</taxon>
        <taxon>Vertebrata</taxon>
        <taxon>Euteleostomi</taxon>
        <taxon>Mammalia</taxon>
        <taxon>Eutheria</taxon>
        <taxon>Laurasiatheria</taxon>
        <taxon>Artiodactyla</taxon>
        <taxon>Ruminantia</taxon>
        <taxon>Pecora</taxon>
        <taxon>Bovidae</taxon>
        <taxon>Bovinae</taxon>
        <taxon>Bos</taxon>
    </lineage>
</organism>
<name>CEL2A_BOVIN</name>